<gene>
    <name evidence="1" type="primary">ligA</name>
    <name type="ordered locus">LMHCC_0806</name>
</gene>
<keyword id="KW-0227">DNA damage</keyword>
<keyword id="KW-0234">DNA repair</keyword>
<keyword id="KW-0235">DNA replication</keyword>
<keyword id="KW-0436">Ligase</keyword>
<keyword id="KW-0460">Magnesium</keyword>
<keyword id="KW-0464">Manganese</keyword>
<keyword id="KW-0479">Metal-binding</keyword>
<keyword id="KW-0520">NAD</keyword>
<keyword id="KW-0862">Zinc</keyword>
<evidence type="ECO:0000255" key="1">
    <source>
        <dbReference type="HAMAP-Rule" id="MF_01588"/>
    </source>
</evidence>
<comment type="function">
    <text evidence="1">DNA ligase that catalyzes the formation of phosphodiester linkages between 5'-phosphoryl and 3'-hydroxyl groups in double-stranded DNA using NAD as a coenzyme and as the energy source for the reaction. It is essential for DNA replication and repair of damaged DNA.</text>
</comment>
<comment type="catalytic activity">
    <reaction evidence="1">
        <text>NAD(+) + (deoxyribonucleotide)n-3'-hydroxyl + 5'-phospho-(deoxyribonucleotide)m = (deoxyribonucleotide)n+m + AMP + beta-nicotinamide D-nucleotide.</text>
        <dbReference type="EC" id="6.5.1.2"/>
    </reaction>
</comment>
<comment type="cofactor">
    <cofactor evidence="1">
        <name>Mg(2+)</name>
        <dbReference type="ChEBI" id="CHEBI:18420"/>
    </cofactor>
    <cofactor evidence="1">
        <name>Mn(2+)</name>
        <dbReference type="ChEBI" id="CHEBI:29035"/>
    </cofactor>
</comment>
<comment type="similarity">
    <text evidence="1">Belongs to the NAD-dependent DNA ligase family. LigA subfamily.</text>
</comment>
<feature type="chain" id="PRO_0000380411" description="DNA ligase">
    <location>
        <begin position="1"/>
        <end position="671"/>
    </location>
</feature>
<feature type="domain" description="BRCT" evidence="1">
    <location>
        <begin position="587"/>
        <end position="671"/>
    </location>
</feature>
<feature type="active site" description="N6-AMP-lysine intermediate" evidence="1">
    <location>
        <position position="112"/>
    </location>
</feature>
<feature type="binding site" evidence="1">
    <location>
        <begin position="31"/>
        <end position="35"/>
    </location>
    <ligand>
        <name>NAD(+)</name>
        <dbReference type="ChEBI" id="CHEBI:57540"/>
    </ligand>
</feature>
<feature type="binding site" evidence="1">
    <location>
        <begin position="80"/>
        <end position="81"/>
    </location>
    <ligand>
        <name>NAD(+)</name>
        <dbReference type="ChEBI" id="CHEBI:57540"/>
    </ligand>
</feature>
<feature type="binding site" evidence="1">
    <location>
        <position position="110"/>
    </location>
    <ligand>
        <name>NAD(+)</name>
        <dbReference type="ChEBI" id="CHEBI:57540"/>
    </ligand>
</feature>
<feature type="binding site" evidence="1">
    <location>
        <position position="133"/>
    </location>
    <ligand>
        <name>NAD(+)</name>
        <dbReference type="ChEBI" id="CHEBI:57540"/>
    </ligand>
</feature>
<feature type="binding site" evidence="1">
    <location>
        <position position="167"/>
    </location>
    <ligand>
        <name>NAD(+)</name>
        <dbReference type="ChEBI" id="CHEBI:57540"/>
    </ligand>
</feature>
<feature type="binding site" evidence="1">
    <location>
        <position position="283"/>
    </location>
    <ligand>
        <name>NAD(+)</name>
        <dbReference type="ChEBI" id="CHEBI:57540"/>
    </ligand>
</feature>
<feature type="binding site" evidence="1">
    <location>
        <position position="307"/>
    </location>
    <ligand>
        <name>NAD(+)</name>
        <dbReference type="ChEBI" id="CHEBI:57540"/>
    </ligand>
</feature>
<feature type="binding site" evidence="1">
    <location>
        <position position="401"/>
    </location>
    <ligand>
        <name>Zn(2+)</name>
        <dbReference type="ChEBI" id="CHEBI:29105"/>
    </ligand>
</feature>
<feature type="binding site" evidence="1">
    <location>
        <position position="404"/>
    </location>
    <ligand>
        <name>Zn(2+)</name>
        <dbReference type="ChEBI" id="CHEBI:29105"/>
    </ligand>
</feature>
<feature type="binding site" evidence="1">
    <location>
        <position position="419"/>
    </location>
    <ligand>
        <name>Zn(2+)</name>
        <dbReference type="ChEBI" id="CHEBI:29105"/>
    </ligand>
</feature>
<feature type="binding site" evidence="1">
    <location>
        <position position="424"/>
    </location>
    <ligand>
        <name>Zn(2+)</name>
        <dbReference type="ChEBI" id="CHEBI:29105"/>
    </ligand>
</feature>
<organism>
    <name type="scientific">Listeria monocytogenes serotype 4a (strain HCC23)</name>
    <dbReference type="NCBI Taxonomy" id="552536"/>
    <lineage>
        <taxon>Bacteria</taxon>
        <taxon>Bacillati</taxon>
        <taxon>Bacillota</taxon>
        <taxon>Bacilli</taxon>
        <taxon>Bacillales</taxon>
        <taxon>Listeriaceae</taxon>
        <taxon>Listeria</taxon>
    </lineage>
</organism>
<sequence>MADKKRYEELINILDQYSYDYYVIDNPTVEDAEYDQKMQELLKIEEAHPEWVTPESPSKRVGGEVLEGFKKVAHDTPMLSLANAFNQEDLADFDRRIRDKVGDDIAYMCELKIDGLAVSLQYENGKYKQGATRGDGTIGEDITANLRTIRSIPMKLQKDYSIEVRGEAFMPKRSFQKLNEIREEEGQMLFANPRNAAAGSLRQLDTKIAASRNLDIFLYAVADFGEMGVETHSAGLDMLETLGLKVNKERRLCNSLEEVYAYIEEWTEKRAGLAYDIDGIVLKLNNLEQQRQMGTTVKSPRWSIAYKFPAEEVPTKLLDIELNVGRTGVITPTAVLEPVRVAGTTVSRASLHNEDLITEKDIRIGDTVLIKKAGDIIPEVIKSITEERSGSEEPFHMPKNCPTCDSELVRLEEEVALRCINPKCPAQIKEGLIHFVSRNAMNIDGLGEKVIIQLFSQHLIKDVADLFFLSKEKLLELERMGEKSVTNLLASIEASKQNSLEKLLFGLGIRHVGAKAAKSLAIHFDTMDNLKVADKETLTSINDIGEKMADSIVTYFANEEVHDLLEELKRAGVNMTYTGPKLEDMSEEELVFAGKTVVLTGKLEKLTRNDAKALIESLGGNVSGSVSKKTDVVVAGSDAGSKLAKAEELAIPIWSEEDLIEYLPDEGGLNE</sequence>
<accession>B8DFG5</accession>
<reference key="1">
    <citation type="journal article" date="2011" name="J. Bacteriol.">
        <title>Genome sequence of lineage III Listeria monocytogenes strain HCC23.</title>
        <authorList>
            <person name="Steele C.L."/>
            <person name="Donaldson J.R."/>
            <person name="Paul D."/>
            <person name="Banes M.M."/>
            <person name="Arick T."/>
            <person name="Bridges S.M."/>
            <person name="Lawrence M.L."/>
        </authorList>
    </citation>
    <scope>NUCLEOTIDE SEQUENCE [LARGE SCALE GENOMIC DNA]</scope>
    <source>
        <strain>HCC23</strain>
    </source>
</reference>
<protein>
    <recommendedName>
        <fullName evidence="1">DNA ligase</fullName>
        <ecNumber evidence="1">6.5.1.2</ecNumber>
    </recommendedName>
    <alternativeName>
        <fullName evidence="1">Polydeoxyribonucleotide synthase [NAD(+)]</fullName>
    </alternativeName>
</protein>
<proteinExistence type="inferred from homology"/>
<name>DNLJ_LISMH</name>
<dbReference type="EC" id="6.5.1.2" evidence="1"/>
<dbReference type="EMBL" id="CP001175">
    <property type="protein sequence ID" value="ACK39158.1"/>
    <property type="molecule type" value="Genomic_DNA"/>
</dbReference>
<dbReference type="RefSeq" id="WP_012581155.1">
    <property type="nucleotide sequence ID" value="NC_011660.1"/>
</dbReference>
<dbReference type="SMR" id="B8DFG5"/>
<dbReference type="KEGG" id="lmh:LMHCC_0806"/>
<dbReference type="HOGENOM" id="CLU_007764_2_1_9"/>
<dbReference type="GO" id="GO:0005829">
    <property type="term" value="C:cytosol"/>
    <property type="evidence" value="ECO:0007669"/>
    <property type="project" value="TreeGrafter"/>
</dbReference>
<dbReference type="GO" id="GO:0003677">
    <property type="term" value="F:DNA binding"/>
    <property type="evidence" value="ECO:0007669"/>
    <property type="project" value="InterPro"/>
</dbReference>
<dbReference type="GO" id="GO:0003911">
    <property type="term" value="F:DNA ligase (NAD+) activity"/>
    <property type="evidence" value="ECO:0007669"/>
    <property type="project" value="UniProtKB-UniRule"/>
</dbReference>
<dbReference type="GO" id="GO:0046872">
    <property type="term" value="F:metal ion binding"/>
    <property type="evidence" value="ECO:0007669"/>
    <property type="project" value="UniProtKB-KW"/>
</dbReference>
<dbReference type="GO" id="GO:0006281">
    <property type="term" value="P:DNA repair"/>
    <property type="evidence" value="ECO:0007669"/>
    <property type="project" value="UniProtKB-KW"/>
</dbReference>
<dbReference type="GO" id="GO:0006260">
    <property type="term" value="P:DNA replication"/>
    <property type="evidence" value="ECO:0007669"/>
    <property type="project" value="UniProtKB-KW"/>
</dbReference>
<dbReference type="CDD" id="cd17748">
    <property type="entry name" value="BRCT_DNA_ligase_like"/>
    <property type="match status" value="1"/>
</dbReference>
<dbReference type="CDD" id="cd00114">
    <property type="entry name" value="LIGANc"/>
    <property type="match status" value="1"/>
</dbReference>
<dbReference type="FunFam" id="1.10.150.20:FF:000006">
    <property type="entry name" value="DNA ligase"/>
    <property type="match status" value="1"/>
</dbReference>
<dbReference type="FunFam" id="1.10.150.20:FF:000007">
    <property type="entry name" value="DNA ligase"/>
    <property type="match status" value="1"/>
</dbReference>
<dbReference type="FunFam" id="1.10.287.610:FF:000002">
    <property type="entry name" value="DNA ligase"/>
    <property type="match status" value="1"/>
</dbReference>
<dbReference type="FunFam" id="2.40.50.140:FF:000012">
    <property type="entry name" value="DNA ligase"/>
    <property type="match status" value="1"/>
</dbReference>
<dbReference type="FunFam" id="3.30.470.30:FF:000001">
    <property type="entry name" value="DNA ligase"/>
    <property type="match status" value="1"/>
</dbReference>
<dbReference type="FunFam" id="3.40.50.10190:FF:000026">
    <property type="entry name" value="DNA ligase"/>
    <property type="match status" value="1"/>
</dbReference>
<dbReference type="FunFam" id="6.20.10.30:FF:000002">
    <property type="entry name" value="DNA ligase"/>
    <property type="match status" value="1"/>
</dbReference>
<dbReference type="Gene3D" id="6.20.10.30">
    <property type="match status" value="1"/>
</dbReference>
<dbReference type="Gene3D" id="1.10.150.20">
    <property type="entry name" value="5' to 3' exonuclease, C-terminal subdomain"/>
    <property type="match status" value="2"/>
</dbReference>
<dbReference type="Gene3D" id="3.40.50.10190">
    <property type="entry name" value="BRCT domain"/>
    <property type="match status" value="1"/>
</dbReference>
<dbReference type="Gene3D" id="3.30.470.30">
    <property type="entry name" value="DNA ligase/mRNA capping enzyme"/>
    <property type="match status" value="1"/>
</dbReference>
<dbReference type="Gene3D" id="1.10.287.610">
    <property type="entry name" value="Helix hairpin bin"/>
    <property type="match status" value="1"/>
</dbReference>
<dbReference type="Gene3D" id="2.40.50.140">
    <property type="entry name" value="Nucleic acid-binding proteins"/>
    <property type="match status" value="1"/>
</dbReference>
<dbReference type="HAMAP" id="MF_01588">
    <property type="entry name" value="DNA_ligase_A"/>
    <property type="match status" value="1"/>
</dbReference>
<dbReference type="InterPro" id="IPR001357">
    <property type="entry name" value="BRCT_dom"/>
</dbReference>
<dbReference type="InterPro" id="IPR036420">
    <property type="entry name" value="BRCT_dom_sf"/>
</dbReference>
<dbReference type="InterPro" id="IPR041663">
    <property type="entry name" value="DisA/LigA_HHH"/>
</dbReference>
<dbReference type="InterPro" id="IPR001679">
    <property type="entry name" value="DNA_ligase"/>
</dbReference>
<dbReference type="InterPro" id="IPR033136">
    <property type="entry name" value="DNA_ligase_CS"/>
</dbReference>
<dbReference type="InterPro" id="IPR013839">
    <property type="entry name" value="DNAligase_adenylation"/>
</dbReference>
<dbReference type="InterPro" id="IPR013840">
    <property type="entry name" value="DNAligase_N"/>
</dbReference>
<dbReference type="InterPro" id="IPR003583">
    <property type="entry name" value="Hlx-hairpin-Hlx_DNA-bd_motif"/>
</dbReference>
<dbReference type="InterPro" id="IPR012340">
    <property type="entry name" value="NA-bd_OB-fold"/>
</dbReference>
<dbReference type="InterPro" id="IPR004150">
    <property type="entry name" value="NAD_DNA_ligase_OB"/>
</dbReference>
<dbReference type="InterPro" id="IPR010994">
    <property type="entry name" value="RuvA_2-like"/>
</dbReference>
<dbReference type="InterPro" id="IPR004149">
    <property type="entry name" value="Znf_DNAligase_C4"/>
</dbReference>
<dbReference type="NCBIfam" id="TIGR00575">
    <property type="entry name" value="dnlj"/>
    <property type="match status" value="1"/>
</dbReference>
<dbReference type="NCBIfam" id="NF005932">
    <property type="entry name" value="PRK07956.1"/>
    <property type="match status" value="1"/>
</dbReference>
<dbReference type="PANTHER" id="PTHR23389">
    <property type="entry name" value="CHROMOSOME TRANSMISSION FIDELITY FACTOR 18"/>
    <property type="match status" value="1"/>
</dbReference>
<dbReference type="PANTHER" id="PTHR23389:SF9">
    <property type="entry name" value="DNA LIGASE"/>
    <property type="match status" value="1"/>
</dbReference>
<dbReference type="Pfam" id="PF00533">
    <property type="entry name" value="BRCT"/>
    <property type="match status" value="1"/>
</dbReference>
<dbReference type="Pfam" id="PF01653">
    <property type="entry name" value="DNA_ligase_aden"/>
    <property type="match status" value="1"/>
</dbReference>
<dbReference type="Pfam" id="PF03120">
    <property type="entry name" value="DNA_ligase_OB"/>
    <property type="match status" value="1"/>
</dbReference>
<dbReference type="Pfam" id="PF03119">
    <property type="entry name" value="DNA_ligase_ZBD"/>
    <property type="match status" value="1"/>
</dbReference>
<dbReference type="Pfam" id="PF12826">
    <property type="entry name" value="HHH_2"/>
    <property type="match status" value="1"/>
</dbReference>
<dbReference type="Pfam" id="PF14520">
    <property type="entry name" value="HHH_5"/>
    <property type="match status" value="1"/>
</dbReference>
<dbReference type="PIRSF" id="PIRSF001604">
    <property type="entry name" value="LigA"/>
    <property type="match status" value="1"/>
</dbReference>
<dbReference type="SMART" id="SM00292">
    <property type="entry name" value="BRCT"/>
    <property type="match status" value="1"/>
</dbReference>
<dbReference type="SMART" id="SM00278">
    <property type="entry name" value="HhH1"/>
    <property type="match status" value="3"/>
</dbReference>
<dbReference type="SMART" id="SM00532">
    <property type="entry name" value="LIGANc"/>
    <property type="match status" value="1"/>
</dbReference>
<dbReference type="SUPFAM" id="SSF52113">
    <property type="entry name" value="BRCT domain"/>
    <property type="match status" value="1"/>
</dbReference>
<dbReference type="SUPFAM" id="SSF56091">
    <property type="entry name" value="DNA ligase/mRNA capping enzyme, catalytic domain"/>
    <property type="match status" value="1"/>
</dbReference>
<dbReference type="SUPFAM" id="SSF50249">
    <property type="entry name" value="Nucleic acid-binding proteins"/>
    <property type="match status" value="1"/>
</dbReference>
<dbReference type="SUPFAM" id="SSF47781">
    <property type="entry name" value="RuvA domain 2-like"/>
    <property type="match status" value="1"/>
</dbReference>
<dbReference type="PROSITE" id="PS50172">
    <property type="entry name" value="BRCT"/>
    <property type="match status" value="1"/>
</dbReference>
<dbReference type="PROSITE" id="PS01056">
    <property type="entry name" value="DNA_LIGASE_N2"/>
    <property type="match status" value="1"/>
</dbReference>